<gene>
    <name evidence="1" type="primary">proB</name>
    <name type="ordered locus">SSA_1072</name>
</gene>
<reference key="1">
    <citation type="journal article" date="2007" name="J. Bacteriol.">
        <title>Genome of the opportunistic pathogen Streptococcus sanguinis.</title>
        <authorList>
            <person name="Xu P."/>
            <person name="Alves J.M."/>
            <person name="Kitten T."/>
            <person name="Brown A."/>
            <person name="Chen Z."/>
            <person name="Ozaki L.S."/>
            <person name="Manque P."/>
            <person name="Ge X."/>
            <person name="Serrano M.G."/>
            <person name="Puiu D."/>
            <person name="Hendricks S."/>
            <person name="Wang Y."/>
            <person name="Chaplin M.D."/>
            <person name="Akan D."/>
            <person name="Paik S."/>
            <person name="Peterson D.L."/>
            <person name="Macrina F.L."/>
            <person name="Buck G.A."/>
        </authorList>
    </citation>
    <scope>NUCLEOTIDE SEQUENCE [LARGE SCALE GENOMIC DNA]</scope>
    <source>
        <strain>SK36</strain>
    </source>
</reference>
<organism>
    <name type="scientific">Streptococcus sanguinis (strain SK36)</name>
    <dbReference type="NCBI Taxonomy" id="388919"/>
    <lineage>
        <taxon>Bacteria</taxon>
        <taxon>Bacillati</taxon>
        <taxon>Bacillota</taxon>
        <taxon>Bacilli</taxon>
        <taxon>Lactobacillales</taxon>
        <taxon>Streptococcaceae</taxon>
        <taxon>Streptococcus</taxon>
    </lineage>
</organism>
<feature type="chain" id="PRO_1000081113" description="Glutamate 5-kinase">
    <location>
        <begin position="1"/>
        <end position="369"/>
    </location>
</feature>
<feature type="domain" description="PUA" evidence="1">
    <location>
        <begin position="275"/>
        <end position="355"/>
    </location>
</feature>
<feature type="binding site" evidence="1">
    <location>
        <position position="9"/>
    </location>
    <ligand>
        <name>ATP</name>
        <dbReference type="ChEBI" id="CHEBI:30616"/>
    </ligand>
</feature>
<feature type="binding site" evidence="1">
    <location>
        <position position="49"/>
    </location>
    <ligand>
        <name>substrate</name>
    </ligand>
</feature>
<feature type="binding site" evidence="1">
    <location>
        <position position="136"/>
    </location>
    <ligand>
        <name>substrate</name>
    </ligand>
</feature>
<feature type="binding site" evidence="1">
    <location>
        <position position="148"/>
    </location>
    <ligand>
        <name>substrate</name>
    </ligand>
</feature>
<feature type="binding site" evidence="1">
    <location>
        <begin position="168"/>
        <end position="169"/>
    </location>
    <ligand>
        <name>ATP</name>
        <dbReference type="ChEBI" id="CHEBI:30616"/>
    </ligand>
</feature>
<feature type="binding site" evidence="1">
    <location>
        <begin position="210"/>
        <end position="216"/>
    </location>
    <ligand>
        <name>ATP</name>
        <dbReference type="ChEBI" id="CHEBI:30616"/>
    </ligand>
</feature>
<comment type="function">
    <text evidence="1">Catalyzes the transfer of a phosphate group to glutamate to form L-glutamate 5-phosphate.</text>
</comment>
<comment type="catalytic activity">
    <reaction evidence="1">
        <text>L-glutamate + ATP = L-glutamyl 5-phosphate + ADP</text>
        <dbReference type="Rhea" id="RHEA:14877"/>
        <dbReference type="ChEBI" id="CHEBI:29985"/>
        <dbReference type="ChEBI" id="CHEBI:30616"/>
        <dbReference type="ChEBI" id="CHEBI:58274"/>
        <dbReference type="ChEBI" id="CHEBI:456216"/>
        <dbReference type="EC" id="2.7.2.11"/>
    </reaction>
</comment>
<comment type="pathway">
    <text evidence="1">Amino-acid biosynthesis; L-proline biosynthesis; L-glutamate 5-semialdehyde from L-glutamate: step 1/2.</text>
</comment>
<comment type="subcellular location">
    <subcellularLocation>
        <location evidence="1">Cytoplasm</location>
    </subcellularLocation>
</comment>
<comment type="similarity">
    <text evidence="1">Belongs to the glutamate 5-kinase family.</text>
</comment>
<proteinExistence type="inferred from homology"/>
<protein>
    <recommendedName>
        <fullName evidence="1">Glutamate 5-kinase</fullName>
        <ecNumber evidence="1">2.7.2.11</ecNumber>
    </recommendedName>
    <alternativeName>
        <fullName evidence="1">Gamma-glutamyl kinase</fullName>
        <shortName evidence="1">GK</shortName>
    </alternativeName>
</protein>
<sequence>MKAKRIVFKVGTSSLTNADGSLSRAKVKEITRQLALLHEAGHELILVSSGAIAAGFSSLGFKKRPTKVADKQASAAVGQGLLLEEYTTNLLLKQIISAQILLTQDDFADKRRYKNAHQALSVLLNRGAIPIINENDTVAIEELKVGDNDTLSAQVAAMVQADLLVLLTDVDGLYTANPSTNPDARRLEKIEKISSELIDMAGGAGTSNGTGGMLTKIKAATLATMSGVPVYICSSLKSDALLEAAEESKDGSLFLAQEKGLKTQKQWLAFYAKSQGEIYVDQGAADALRNNGKSLLVSGLVSVLGSFAYQDTVTVYEDGSGAILGKGRVRFGKSSLKDMLKSNKPKGVVIHRDDWISLTPELNDLFAEF</sequence>
<evidence type="ECO:0000255" key="1">
    <source>
        <dbReference type="HAMAP-Rule" id="MF_00456"/>
    </source>
</evidence>
<name>PROB_STRSV</name>
<dbReference type="EC" id="2.7.2.11" evidence="1"/>
<dbReference type="EMBL" id="CP000387">
    <property type="protein sequence ID" value="ABN44485.1"/>
    <property type="molecule type" value="Genomic_DNA"/>
</dbReference>
<dbReference type="RefSeq" id="WP_011836904.1">
    <property type="nucleotide sequence ID" value="NC_009009.1"/>
</dbReference>
<dbReference type="RefSeq" id="YP_001035035.1">
    <property type="nucleotide sequence ID" value="NC_009009.1"/>
</dbReference>
<dbReference type="SMR" id="A3CMT0"/>
<dbReference type="STRING" id="388919.SSA_1072"/>
<dbReference type="KEGG" id="ssa:SSA_1072"/>
<dbReference type="PATRIC" id="fig|388919.9.peg.1019"/>
<dbReference type="eggNOG" id="COG0263">
    <property type="taxonomic scope" value="Bacteria"/>
</dbReference>
<dbReference type="HOGENOM" id="CLU_025400_2_0_9"/>
<dbReference type="OrthoDB" id="9804434at2"/>
<dbReference type="UniPathway" id="UPA00098">
    <property type="reaction ID" value="UER00359"/>
</dbReference>
<dbReference type="Proteomes" id="UP000002148">
    <property type="component" value="Chromosome"/>
</dbReference>
<dbReference type="GO" id="GO:0005829">
    <property type="term" value="C:cytosol"/>
    <property type="evidence" value="ECO:0007669"/>
    <property type="project" value="TreeGrafter"/>
</dbReference>
<dbReference type="GO" id="GO:0005524">
    <property type="term" value="F:ATP binding"/>
    <property type="evidence" value="ECO:0007669"/>
    <property type="project" value="UniProtKB-KW"/>
</dbReference>
<dbReference type="GO" id="GO:0004349">
    <property type="term" value="F:glutamate 5-kinase activity"/>
    <property type="evidence" value="ECO:0007669"/>
    <property type="project" value="UniProtKB-UniRule"/>
</dbReference>
<dbReference type="GO" id="GO:0003723">
    <property type="term" value="F:RNA binding"/>
    <property type="evidence" value="ECO:0007669"/>
    <property type="project" value="InterPro"/>
</dbReference>
<dbReference type="GO" id="GO:0055129">
    <property type="term" value="P:L-proline biosynthetic process"/>
    <property type="evidence" value="ECO:0007669"/>
    <property type="project" value="UniProtKB-UniRule"/>
</dbReference>
<dbReference type="CDD" id="cd04242">
    <property type="entry name" value="AAK_G5K_ProB"/>
    <property type="match status" value="1"/>
</dbReference>
<dbReference type="CDD" id="cd21157">
    <property type="entry name" value="PUA_G5K"/>
    <property type="match status" value="1"/>
</dbReference>
<dbReference type="FunFam" id="3.40.1160.10:FF:000018">
    <property type="entry name" value="Glutamate 5-kinase"/>
    <property type="match status" value="1"/>
</dbReference>
<dbReference type="Gene3D" id="3.40.1160.10">
    <property type="entry name" value="Acetylglutamate kinase-like"/>
    <property type="match status" value="1"/>
</dbReference>
<dbReference type="Gene3D" id="2.30.130.10">
    <property type="entry name" value="PUA domain"/>
    <property type="match status" value="1"/>
</dbReference>
<dbReference type="HAMAP" id="MF_00456">
    <property type="entry name" value="ProB"/>
    <property type="match status" value="1"/>
</dbReference>
<dbReference type="InterPro" id="IPR036393">
    <property type="entry name" value="AceGlu_kinase-like_sf"/>
</dbReference>
<dbReference type="InterPro" id="IPR001048">
    <property type="entry name" value="Asp/Glu/Uridylate_kinase"/>
</dbReference>
<dbReference type="InterPro" id="IPR041739">
    <property type="entry name" value="G5K_ProB"/>
</dbReference>
<dbReference type="InterPro" id="IPR001057">
    <property type="entry name" value="Glu/AcGlu_kinase"/>
</dbReference>
<dbReference type="InterPro" id="IPR011529">
    <property type="entry name" value="Glu_5kinase"/>
</dbReference>
<dbReference type="InterPro" id="IPR005715">
    <property type="entry name" value="Glu_5kinase/COase_Synthase"/>
</dbReference>
<dbReference type="InterPro" id="IPR019797">
    <property type="entry name" value="Glutamate_5-kinase_CS"/>
</dbReference>
<dbReference type="InterPro" id="IPR002478">
    <property type="entry name" value="PUA"/>
</dbReference>
<dbReference type="InterPro" id="IPR015947">
    <property type="entry name" value="PUA-like_sf"/>
</dbReference>
<dbReference type="InterPro" id="IPR036974">
    <property type="entry name" value="PUA_sf"/>
</dbReference>
<dbReference type="NCBIfam" id="TIGR01027">
    <property type="entry name" value="proB"/>
    <property type="match status" value="1"/>
</dbReference>
<dbReference type="PANTHER" id="PTHR43654">
    <property type="entry name" value="GLUTAMATE 5-KINASE"/>
    <property type="match status" value="1"/>
</dbReference>
<dbReference type="PANTHER" id="PTHR43654:SF1">
    <property type="entry name" value="ISOPENTENYL PHOSPHATE KINASE"/>
    <property type="match status" value="1"/>
</dbReference>
<dbReference type="Pfam" id="PF00696">
    <property type="entry name" value="AA_kinase"/>
    <property type="match status" value="1"/>
</dbReference>
<dbReference type="Pfam" id="PF01472">
    <property type="entry name" value="PUA"/>
    <property type="match status" value="1"/>
</dbReference>
<dbReference type="PIRSF" id="PIRSF000729">
    <property type="entry name" value="GK"/>
    <property type="match status" value="1"/>
</dbReference>
<dbReference type="PRINTS" id="PR00474">
    <property type="entry name" value="GLU5KINASE"/>
</dbReference>
<dbReference type="SMART" id="SM00359">
    <property type="entry name" value="PUA"/>
    <property type="match status" value="1"/>
</dbReference>
<dbReference type="SUPFAM" id="SSF53633">
    <property type="entry name" value="Carbamate kinase-like"/>
    <property type="match status" value="1"/>
</dbReference>
<dbReference type="SUPFAM" id="SSF88697">
    <property type="entry name" value="PUA domain-like"/>
    <property type="match status" value="1"/>
</dbReference>
<dbReference type="PROSITE" id="PS00902">
    <property type="entry name" value="GLUTAMATE_5_KINASE"/>
    <property type="match status" value="1"/>
</dbReference>
<dbReference type="PROSITE" id="PS50890">
    <property type="entry name" value="PUA"/>
    <property type="match status" value="1"/>
</dbReference>
<keyword id="KW-0028">Amino-acid biosynthesis</keyword>
<keyword id="KW-0067">ATP-binding</keyword>
<keyword id="KW-0963">Cytoplasm</keyword>
<keyword id="KW-0418">Kinase</keyword>
<keyword id="KW-0547">Nucleotide-binding</keyword>
<keyword id="KW-0641">Proline biosynthesis</keyword>
<keyword id="KW-1185">Reference proteome</keyword>
<keyword id="KW-0808">Transferase</keyword>
<accession>A3CMT0</accession>